<protein>
    <recommendedName>
        <fullName evidence="1">Diaminopimelate epimerase</fullName>
        <shortName evidence="1">DAP epimerase</shortName>
        <ecNumber evidence="1">5.1.1.7</ecNumber>
    </recommendedName>
    <alternativeName>
        <fullName evidence="1">PLP-independent amino acid racemase</fullName>
    </alternativeName>
</protein>
<proteinExistence type="inferred from homology"/>
<name>DAPF_PHOV8</name>
<reference key="1">
    <citation type="journal article" date="2007" name="PLoS Biol.">
        <title>Evolution of symbiotic bacteria in the distal human intestine.</title>
        <authorList>
            <person name="Xu J."/>
            <person name="Mahowald M.A."/>
            <person name="Ley R.E."/>
            <person name="Lozupone C.A."/>
            <person name="Hamady M."/>
            <person name="Martens E.C."/>
            <person name="Henrissat B."/>
            <person name="Coutinho P.M."/>
            <person name="Minx P."/>
            <person name="Latreille P."/>
            <person name="Cordum H."/>
            <person name="Van Brunt A."/>
            <person name="Kim K."/>
            <person name="Fulton R.S."/>
            <person name="Fulton L.A."/>
            <person name="Clifton S.W."/>
            <person name="Wilson R.K."/>
            <person name="Knight R.D."/>
            <person name="Gordon J.I."/>
        </authorList>
    </citation>
    <scope>NUCLEOTIDE SEQUENCE [LARGE SCALE GENOMIC DNA]</scope>
    <source>
        <strain>ATCC 8482 / DSM 1447 / JCM 5826 / CCUG 4940 / NBRC 14291 / NCTC 11154</strain>
    </source>
</reference>
<sequence length="280" mass="30295">MATTIKFTKMQGTGNDYIYVNTLSSPLQDPIKAARKWSTYHTGIGADGLVLIGASEKADFSMRIFNADGSEAMMCGNASRCIGKYVYEKGLTDKEVITLETLSGIKILKLHTGNGVVKDVTVDMGTPLLSNPGQIATKTGGMLAETIPADGKEYKGTFVCMGNPHVVIFVDDIKEVDLPAVGPKLENHPLFPERTNVEFVEILPDQSLRMRVWERGSGITMACGTGACATAVAAVLNHKAGRKSWVRMDGGDLHIHWNEKDGHVYMTGPAGKVFEGEIEM</sequence>
<feature type="chain" id="PRO_1000011844" description="Diaminopimelate epimerase">
    <location>
        <begin position="1"/>
        <end position="280"/>
    </location>
</feature>
<feature type="active site" description="Proton donor" evidence="1">
    <location>
        <position position="75"/>
    </location>
</feature>
<feature type="active site" description="Proton acceptor" evidence="1">
    <location>
        <position position="223"/>
    </location>
</feature>
<feature type="binding site" evidence="1">
    <location>
        <position position="15"/>
    </location>
    <ligand>
        <name>substrate</name>
    </ligand>
</feature>
<feature type="binding site" evidence="1">
    <location>
        <position position="66"/>
    </location>
    <ligand>
        <name>substrate</name>
    </ligand>
</feature>
<feature type="binding site" evidence="1">
    <location>
        <begin position="76"/>
        <end position="77"/>
    </location>
    <ligand>
        <name>substrate</name>
    </ligand>
</feature>
<feature type="binding site" evidence="1">
    <location>
        <position position="163"/>
    </location>
    <ligand>
        <name>substrate</name>
    </ligand>
</feature>
<feature type="binding site" evidence="1">
    <location>
        <position position="196"/>
    </location>
    <ligand>
        <name>substrate</name>
    </ligand>
</feature>
<feature type="binding site" evidence="1">
    <location>
        <begin position="214"/>
        <end position="215"/>
    </location>
    <ligand>
        <name>substrate</name>
    </ligand>
</feature>
<feature type="binding site" evidence="1">
    <location>
        <begin position="224"/>
        <end position="225"/>
    </location>
    <ligand>
        <name>substrate</name>
    </ligand>
</feature>
<feature type="site" description="Could be important to modulate the pK values of the two catalytic cysteine residues" evidence="1">
    <location>
        <position position="165"/>
    </location>
</feature>
<feature type="site" description="Could be important to modulate the pK values of the two catalytic cysteine residues" evidence="1">
    <location>
        <position position="214"/>
    </location>
</feature>
<accession>A6L7E5</accession>
<organism>
    <name type="scientific">Phocaeicola vulgatus (strain ATCC 8482 / DSM 1447 / JCM 5826 / CCUG 4940 / NBRC 14291 / NCTC 11154)</name>
    <name type="common">Bacteroides vulgatus</name>
    <dbReference type="NCBI Taxonomy" id="435590"/>
    <lineage>
        <taxon>Bacteria</taxon>
        <taxon>Pseudomonadati</taxon>
        <taxon>Bacteroidota</taxon>
        <taxon>Bacteroidia</taxon>
        <taxon>Bacteroidales</taxon>
        <taxon>Bacteroidaceae</taxon>
        <taxon>Phocaeicola</taxon>
    </lineage>
</organism>
<keyword id="KW-0028">Amino-acid biosynthesis</keyword>
<keyword id="KW-0963">Cytoplasm</keyword>
<keyword id="KW-0413">Isomerase</keyword>
<keyword id="KW-0457">Lysine biosynthesis</keyword>
<gene>
    <name evidence="1" type="primary">dapF</name>
    <name type="ordered locus">BVU_4006</name>
</gene>
<evidence type="ECO:0000255" key="1">
    <source>
        <dbReference type="HAMAP-Rule" id="MF_00197"/>
    </source>
</evidence>
<comment type="function">
    <text evidence="1">Catalyzes the stereoinversion of LL-2,6-diaminopimelate (L,L-DAP) to meso-diaminopimelate (meso-DAP), a precursor of L-lysine and an essential component of the bacterial peptidoglycan.</text>
</comment>
<comment type="catalytic activity">
    <reaction evidence="1">
        <text>(2S,6S)-2,6-diaminopimelate = meso-2,6-diaminopimelate</text>
        <dbReference type="Rhea" id="RHEA:15393"/>
        <dbReference type="ChEBI" id="CHEBI:57609"/>
        <dbReference type="ChEBI" id="CHEBI:57791"/>
        <dbReference type="EC" id="5.1.1.7"/>
    </reaction>
</comment>
<comment type="pathway">
    <text evidence="1">Amino-acid biosynthesis; L-lysine biosynthesis via DAP pathway; DL-2,6-diaminopimelate from LL-2,6-diaminopimelate: step 1/1.</text>
</comment>
<comment type="subunit">
    <text evidence="1">Homodimer.</text>
</comment>
<comment type="subcellular location">
    <subcellularLocation>
        <location evidence="1">Cytoplasm</location>
    </subcellularLocation>
</comment>
<comment type="similarity">
    <text evidence="1">Belongs to the diaminopimelate epimerase family.</text>
</comment>
<dbReference type="EC" id="5.1.1.7" evidence="1"/>
<dbReference type="EMBL" id="CP000139">
    <property type="protein sequence ID" value="ABR41609.1"/>
    <property type="molecule type" value="Genomic_DNA"/>
</dbReference>
<dbReference type="RefSeq" id="WP_005839633.1">
    <property type="nucleotide sequence ID" value="NZ_CAXVNH010000019.1"/>
</dbReference>
<dbReference type="SMR" id="A6L7E5"/>
<dbReference type="STRING" id="435590.BVU_4006"/>
<dbReference type="PaxDb" id="435590-BVU_4006"/>
<dbReference type="GeneID" id="5304965"/>
<dbReference type="KEGG" id="bvu:BVU_4006"/>
<dbReference type="eggNOG" id="COG0253">
    <property type="taxonomic scope" value="Bacteria"/>
</dbReference>
<dbReference type="HOGENOM" id="CLU_053306_3_0_10"/>
<dbReference type="BioCyc" id="BVUL435590:G1G59-4143-MONOMER"/>
<dbReference type="UniPathway" id="UPA00034">
    <property type="reaction ID" value="UER00025"/>
</dbReference>
<dbReference type="Proteomes" id="UP000002861">
    <property type="component" value="Chromosome"/>
</dbReference>
<dbReference type="GO" id="GO:0005829">
    <property type="term" value="C:cytosol"/>
    <property type="evidence" value="ECO:0007669"/>
    <property type="project" value="TreeGrafter"/>
</dbReference>
<dbReference type="GO" id="GO:0008837">
    <property type="term" value="F:diaminopimelate epimerase activity"/>
    <property type="evidence" value="ECO:0007669"/>
    <property type="project" value="UniProtKB-UniRule"/>
</dbReference>
<dbReference type="GO" id="GO:0009089">
    <property type="term" value="P:lysine biosynthetic process via diaminopimelate"/>
    <property type="evidence" value="ECO:0007669"/>
    <property type="project" value="UniProtKB-UniRule"/>
</dbReference>
<dbReference type="Gene3D" id="3.10.310.10">
    <property type="entry name" value="Diaminopimelate Epimerase, Chain A, domain 1"/>
    <property type="match status" value="2"/>
</dbReference>
<dbReference type="HAMAP" id="MF_00197">
    <property type="entry name" value="DAP_epimerase"/>
    <property type="match status" value="1"/>
</dbReference>
<dbReference type="InterPro" id="IPR018510">
    <property type="entry name" value="DAP_epimerase_AS"/>
</dbReference>
<dbReference type="InterPro" id="IPR001653">
    <property type="entry name" value="DAP_epimerase_DapF"/>
</dbReference>
<dbReference type="NCBIfam" id="TIGR00652">
    <property type="entry name" value="DapF"/>
    <property type="match status" value="1"/>
</dbReference>
<dbReference type="PANTHER" id="PTHR31689:SF0">
    <property type="entry name" value="DIAMINOPIMELATE EPIMERASE"/>
    <property type="match status" value="1"/>
</dbReference>
<dbReference type="PANTHER" id="PTHR31689">
    <property type="entry name" value="DIAMINOPIMELATE EPIMERASE, CHLOROPLASTIC"/>
    <property type="match status" value="1"/>
</dbReference>
<dbReference type="Pfam" id="PF01678">
    <property type="entry name" value="DAP_epimerase"/>
    <property type="match status" value="2"/>
</dbReference>
<dbReference type="SUPFAM" id="SSF54506">
    <property type="entry name" value="Diaminopimelate epimerase-like"/>
    <property type="match status" value="2"/>
</dbReference>
<dbReference type="PROSITE" id="PS01326">
    <property type="entry name" value="DAP_EPIMERASE"/>
    <property type="match status" value="1"/>
</dbReference>